<sequence>MATLDGINVKDIVKVERTSVHSHITGLGLNDRLEAEYVSGGMVGQVAARQAAGLIVKMIQEGKIAGRALLVTGEPGAGKTAIAIAISKELGEDTPFVSIVASEIYSNEINKTEALTQAFRRALGIQIKEETEVLEGEVISLEVDRSANGMGPKVGKLTMRTTDMETIYDLGSKMVDACLKEKVMPGDVIQVDKASGRVTRLGRSFNRSHDYDAMGPKVKLVQCPDGEIQKRRETVHTVCLHDIDVINSRTQGYVALFSGDTGEIKAEVRDQINKKVLEWREEGKAKFVPGVLFIDEAHMLDIECFSFLNRAIEGELSPLIIMATNRLIEKVRGTDVESAHGIPSDFLDRMLIINAIPYTKEDTAKILSIRCDEEGVKLQPTALDLLVKLQEATSLRYCIHLIAASEVIRIRSKAEIVTTDHIGSAYRLFFDTKRSEKILTEESAGFLQ</sequence>
<protein>
    <recommendedName>
        <fullName evidence="3">RuvB-like 2</fullName>
        <ecNumber evidence="1">3.6.4.12</ecNumber>
    </recommendedName>
    <alternativeName>
        <fullName evidence="6">Reptin</fullName>
    </alternativeName>
</protein>
<evidence type="ECO:0000250" key="1">
    <source>
        <dbReference type="UniProtKB" id="P0A812"/>
    </source>
</evidence>
<evidence type="ECO:0000250" key="2">
    <source>
        <dbReference type="UniProtKB" id="Q12464"/>
    </source>
</evidence>
<evidence type="ECO:0000250" key="3">
    <source>
        <dbReference type="UniProtKB" id="Q9Y230"/>
    </source>
</evidence>
<evidence type="ECO:0000269" key="4">
    <source>
    </source>
</evidence>
<evidence type="ECO:0000269" key="5">
    <source>
    </source>
</evidence>
<evidence type="ECO:0000303" key="6">
    <source>
    </source>
</evidence>
<evidence type="ECO:0000305" key="7"/>
<evidence type="ECO:0000312" key="8">
    <source>
        <dbReference type="Proteomes" id="UP000001940"/>
    </source>
</evidence>
<evidence type="ECO:0000312" key="9">
    <source>
        <dbReference type="WormBase" id="T22D1.10"/>
    </source>
</evidence>
<feature type="chain" id="PRO_0000434945" description="RuvB-like 2" evidence="7">
    <location>
        <begin position="1"/>
        <end position="448"/>
    </location>
</feature>
<feature type="binding site" evidence="7">
    <location>
        <begin position="73"/>
        <end position="80"/>
    </location>
    <ligand>
        <name>ATP</name>
        <dbReference type="ChEBI" id="CHEBI:30616"/>
    </ligand>
</feature>
<organism evidence="8">
    <name type="scientific">Caenorhabditis elegans</name>
    <dbReference type="NCBI Taxonomy" id="6239"/>
    <lineage>
        <taxon>Eukaryota</taxon>
        <taxon>Metazoa</taxon>
        <taxon>Ecdysozoa</taxon>
        <taxon>Nematoda</taxon>
        <taxon>Chromadorea</taxon>
        <taxon>Rhabditida</taxon>
        <taxon>Rhabditina</taxon>
        <taxon>Rhabditomorpha</taxon>
        <taxon>Rhabditoidea</taxon>
        <taxon>Rhabditidae</taxon>
        <taxon>Peloderinae</taxon>
        <taxon>Caenorhabditis</taxon>
    </lineage>
</organism>
<accession>Q9GZH2</accession>
<proteinExistence type="evidence at protein level"/>
<name>RUVB2_CAEEL</name>
<comment type="function">
    <text evidence="2 3 4 5">Possesses single-stranded DNA-stimulated ATPase and ATP-dependent DNA helicase (5' to 3') activity suggesting a role in nuclear processes such as recombination and transcription (By similarity). May participate in several chromatin remodeling complexes that mediate the ATP-dependent exchange of histones and remodel chromatin by shifting nucleosomes (By similarity). Involvement in these complexes is likely required for transcriptional activation of selected genes and DNA repair in response to DNA damage (By similarity). Has a role in gonadal development (PubMed:25437307). Involved in the endoplasmic reticulum (ER)-associated degradation (ERAD) pathway where it negatively regulates expression of ER stress response genes (PubMed:25652260). Specifically, negatively controls the expression of ER homeostasis regulator ckb-2 in a cdc-48.1/2-dependent manner (PubMed:25652260).</text>
</comment>
<comment type="catalytic activity">
    <reaction evidence="1">
        <text>ATP + H2O = ADP + phosphate + H(+)</text>
        <dbReference type="Rhea" id="RHEA:13065"/>
        <dbReference type="ChEBI" id="CHEBI:15377"/>
        <dbReference type="ChEBI" id="CHEBI:15378"/>
        <dbReference type="ChEBI" id="CHEBI:30616"/>
        <dbReference type="ChEBI" id="CHEBI:43474"/>
        <dbReference type="ChEBI" id="CHEBI:456216"/>
        <dbReference type="EC" id="3.6.4.12"/>
    </reaction>
</comment>
<comment type="subunit">
    <text evidence="3">Forms homohexameric rings. May form a dodecamer with ruvb-1 made of two stacked hexameric rings.</text>
</comment>
<comment type="interaction">
    <interactant intactId="EBI-316221">
        <id>Q9GZH2</id>
    </interactant>
    <interactant intactId="EBI-316213">
        <id>O17607</id>
        <label>ruvb-1</label>
    </interactant>
    <organismsDiffer>false</organismsDiffer>
    <experiments>7</experiments>
</comment>
<comment type="subcellular location">
    <subcellularLocation>
        <location evidence="4">Cytoplasm</location>
    </subcellularLocation>
    <subcellularLocation>
        <location evidence="4">Nucleus</location>
    </subcellularLocation>
</comment>
<comment type="tissue specificity">
    <text evidence="4">Expressed in gonadal cells.</text>
</comment>
<comment type="disruption phenotype">
    <text evidence="4 5">RNAi-mediated knockdown results in gonadal detachment during gonad migration (PubMed:25437307). RNAi-mediated knockdown upon tunicamycin-induced ER stress in a cdc-48.1 and/or cdc-48.2 mutant background (insensitive to tunicamycin-induced ER stress) restores the expression of ER homeostasis regulator, ckb-2 (PubMed:25652260).</text>
</comment>
<comment type="similarity">
    <text evidence="7">Belongs to the RuvB family.</text>
</comment>
<dbReference type="EC" id="3.6.4.12" evidence="1"/>
<dbReference type="EMBL" id="BX284604">
    <property type="protein sequence ID" value="CCD62026.1"/>
    <property type="molecule type" value="Genomic_DNA"/>
</dbReference>
<dbReference type="PIR" id="T32710">
    <property type="entry name" value="T32710"/>
</dbReference>
<dbReference type="RefSeq" id="NP_501067.1">
    <property type="nucleotide sequence ID" value="NM_068666.6"/>
</dbReference>
<dbReference type="SMR" id="Q9GZH2"/>
<dbReference type="FunCoup" id="Q9GZH2">
    <property type="interactions" value="2820"/>
</dbReference>
<dbReference type="IntAct" id="Q9GZH2">
    <property type="interactions" value="2"/>
</dbReference>
<dbReference type="STRING" id="6239.T22D1.10.1"/>
<dbReference type="PaxDb" id="6239-T22D1.10"/>
<dbReference type="PeptideAtlas" id="Q9GZH2"/>
<dbReference type="EnsemblMetazoa" id="T22D1.10.1">
    <property type="protein sequence ID" value="T22D1.10.1"/>
    <property type="gene ID" value="WBGene00020687"/>
</dbReference>
<dbReference type="GeneID" id="177458"/>
<dbReference type="KEGG" id="cel:CELE_T22D1.10"/>
<dbReference type="UCSC" id="T22D1.10">
    <property type="organism name" value="c. elegans"/>
</dbReference>
<dbReference type="AGR" id="WB:WBGene00020687"/>
<dbReference type="CTD" id="177458"/>
<dbReference type="WormBase" id="T22D1.10">
    <property type="protein sequence ID" value="CE17254"/>
    <property type="gene ID" value="WBGene00020687"/>
    <property type="gene designation" value="ruvb-2"/>
</dbReference>
<dbReference type="eggNOG" id="KOG2680">
    <property type="taxonomic scope" value="Eukaryota"/>
</dbReference>
<dbReference type="GeneTree" id="ENSGT00940000153556"/>
<dbReference type="HOGENOM" id="CLU_028311_4_0_1"/>
<dbReference type="InParanoid" id="Q9GZH2"/>
<dbReference type="OMA" id="IINTEPY"/>
<dbReference type="OrthoDB" id="10060499at2759"/>
<dbReference type="PhylomeDB" id="Q9GZH2"/>
<dbReference type="PRO" id="PR:Q9GZH2"/>
<dbReference type="Proteomes" id="UP000001940">
    <property type="component" value="Chromosome IV"/>
</dbReference>
<dbReference type="Bgee" id="WBGene00020687">
    <property type="expression patterns" value="Expressed in germ line (C elegans) and 4 other cell types or tissues"/>
</dbReference>
<dbReference type="GO" id="GO:0005737">
    <property type="term" value="C:cytoplasm"/>
    <property type="evidence" value="ECO:0000314"/>
    <property type="project" value="WormBase"/>
</dbReference>
<dbReference type="GO" id="GO:0031011">
    <property type="term" value="C:Ino80 complex"/>
    <property type="evidence" value="ECO:0000318"/>
    <property type="project" value="GO_Central"/>
</dbReference>
<dbReference type="GO" id="GO:0035267">
    <property type="term" value="C:NuA4 histone acetyltransferase complex"/>
    <property type="evidence" value="ECO:0000318"/>
    <property type="project" value="GO_Central"/>
</dbReference>
<dbReference type="GO" id="GO:0005634">
    <property type="term" value="C:nucleus"/>
    <property type="evidence" value="ECO:0000314"/>
    <property type="project" value="WormBase"/>
</dbReference>
<dbReference type="GO" id="GO:0097255">
    <property type="term" value="C:R2TP complex"/>
    <property type="evidence" value="ECO:0000318"/>
    <property type="project" value="GO_Central"/>
</dbReference>
<dbReference type="GO" id="GO:0000812">
    <property type="term" value="C:Swr1 complex"/>
    <property type="evidence" value="ECO:0000318"/>
    <property type="project" value="GO_Central"/>
</dbReference>
<dbReference type="GO" id="GO:0005524">
    <property type="term" value="F:ATP binding"/>
    <property type="evidence" value="ECO:0007669"/>
    <property type="project" value="UniProtKB-KW"/>
</dbReference>
<dbReference type="GO" id="GO:0016887">
    <property type="term" value="F:ATP hydrolysis activity"/>
    <property type="evidence" value="ECO:0007669"/>
    <property type="project" value="InterPro"/>
</dbReference>
<dbReference type="GO" id="GO:0003678">
    <property type="term" value="F:DNA helicase activity"/>
    <property type="evidence" value="ECO:0000318"/>
    <property type="project" value="GO_Central"/>
</dbReference>
<dbReference type="GO" id="GO:0000492">
    <property type="term" value="P:box C/D snoRNP assembly"/>
    <property type="evidence" value="ECO:0000318"/>
    <property type="project" value="GO_Central"/>
</dbReference>
<dbReference type="GO" id="GO:0006338">
    <property type="term" value="P:chromatin remodeling"/>
    <property type="evidence" value="ECO:0000318"/>
    <property type="project" value="GO_Central"/>
</dbReference>
<dbReference type="GO" id="GO:0006281">
    <property type="term" value="P:DNA repair"/>
    <property type="evidence" value="ECO:0007669"/>
    <property type="project" value="UniProtKB-KW"/>
</dbReference>
<dbReference type="GO" id="GO:0006357">
    <property type="term" value="P:regulation of transcription by RNA polymerase II"/>
    <property type="evidence" value="ECO:0000318"/>
    <property type="project" value="GO_Central"/>
</dbReference>
<dbReference type="FunFam" id="3.40.50.300:FF:002221">
    <property type="entry name" value="RuvB-like 2"/>
    <property type="match status" value="2"/>
</dbReference>
<dbReference type="FunFam" id="2.40.50.360:FF:000002">
    <property type="entry name" value="RuvB-like helicase"/>
    <property type="match status" value="1"/>
</dbReference>
<dbReference type="Gene3D" id="1.10.8.60">
    <property type="match status" value="1"/>
</dbReference>
<dbReference type="Gene3D" id="3.40.50.300">
    <property type="entry name" value="P-loop containing nucleotide triphosphate hydrolases"/>
    <property type="match status" value="1"/>
</dbReference>
<dbReference type="Gene3D" id="2.40.50.360">
    <property type="entry name" value="RuvB-like helicase, domain II"/>
    <property type="match status" value="1"/>
</dbReference>
<dbReference type="InterPro" id="IPR003593">
    <property type="entry name" value="AAA+_ATPase"/>
</dbReference>
<dbReference type="InterPro" id="IPR012340">
    <property type="entry name" value="NA-bd_OB-fold"/>
</dbReference>
<dbReference type="InterPro" id="IPR027417">
    <property type="entry name" value="P-loop_NTPase"/>
</dbReference>
<dbReference type="InterPro" id="IPR027238">
    <property type="entry name" value="RuvB-like"/>
</dbReference>
<dbReference type="InterPro" id="IPR041048">
    <property type="entry name" value="RuvB-like_C"/>
</dbReference>
<dbReference type="InterPro" id="IPR042487">
    <property type="entry name" value="RuvBL1/2_DNA/RNA_bd_dom"/>
</dbReference>
<dbReference type="InterPro" id="IPR010339">
    <property type="entry name" value="TIP49_P-loop"/>
</dbReference>
<dbReference type="PANTHER" id="PTHR11093">
    <property type="entry name" value="RUVB-RELATED REPTIN AND PONTIN"/>
    <property type="match status" value="1"/>
</dbReference>
<dbReference type="Pfam" id="PF06068">
    <property type="entry name" value="TIP49"/>
    <property type="match status" value="1"/>
</dbReference>
<dbReference type="Pfam" id="PF17856">
    <property type="entry name" value="TIP49_C"/>
    <property type="match status" value="1"/>
</dbReference>
<dbReference type="SMART" id="SM00382">
    <property type="entry name" value="AAA"/>
    <property type="match status" value="1"/>
</dbReference>
<dbReference type="SUPFAM" id="SSF50249">
    <property type="entry name" value="Nucleic acid-binding proteins"/>
    <property type="match status" value="1"/>
</dbReference>
<dbReference type="SUPFAM" id="SSF52540">
    <property type="entry name" value="P-loop containing nucleoside triphosphate hydrolases"/>
    <property type="match status" value="1"/>
</dbReference>
<reference evidence="8" key="1">
    <citation type="journal article" date="1998" name="Science">
        <title>Genome sequence of the nematode C. elegans: a platform for investigating biology.</title>
        <authorList>
            <consortium name="The C. elegans sequencing consortium"/>
        </authorList>
    </citation>
    <scope>NUCLEOTIDE SEQUENCE [LARGE SCALE GENOMIC DNA]</scope>
    <source>
        <strain evidence="8">Bristol N2</strain>
    </source>
</reference>
<reference evidence="7" key="2">
    <citation type="journal article" date="2014" name="Elife">
        <title>LINKIN, a new transmembrane protein necessary for cell adhesion.</title>
        <authorList>
            <person name="Kato M."/>
            <person name="Chou T.F."/>
            <person name="Yu C.Z."/>
            <person name="DeModena J."/>
            <person name="Sternberg P.W."/>
        </authorList>
    </citation>
    <scope>FUNCTION</scope>
    <scope>SUBCELLULAR LOCATION</scope>
    <scope>TISSUE SPECIFICITY</scope>
    <scope>DISRUPTION PHENOTYPE</scope>
</reference>
<reference evidence="7" key="3">
    <citation type="journal article" date="2015" name="EMBO Rep.">
        <title>Genome-wide screen identifies a novel p97/CDC-48-dependent pathway regulating ER-stress-induced gene transcription.</title>
        <authorList>
            <person name="Marza E."/>
            <person name="Taouji S."/>
            <person name="Barroso K."/>
            <person name="Raymond A.A."/>
            <person name="Guignard L."/>
            <person name="Bonneu M."/>
            <person name="Pallares-Lupon N."/>
            <person name="Dupuy J.W."/>
            <person name="Fernandez-Zapico M.E."/>
            <person name="Rosenbaum J."/>
            <person name="Palladino F."/>
            <person name="Dupuy D."/>
            <person name="Chevet E."/>
        </authorList>
    </citation>
    <scope>FUNCTION</scope>
    <scope>DISRUPTION PHENOTYPE</scope>
    <scope>IDENTIFICATION BY MASS SPECTROMETRY</scope>
</reference>
<keyword id="KW-0067">ATP-binding</keyword>
<keyword id="KW-0156">Chromatin regulator</keyword>
<keyword id="KW-0963">Cytoplasm</keyword>
<keyword id="KW-0227">DNA damage</keyword>
<keyword id="KW-0234">DNA repair</keyword>
<keyword id="KW-0347">Helicase</keyword>
<keyword id="KW-0378">Hydrolase</keyword>
<keyword id="KW-0547">Nucleotide-binding</keyword>
<keyword id="KW-0539">Nucleus</keyword>
<keyword id="KW-1185">Reference proteome</keyword>
<keyword id="KW-0804">Transcription</keyword>
<keyword id="KW-0805">Transcription regulation</keyword>
<gene>
    <name evidence="9" type="primary">ruvb-2</name>
    <name evidence="9" type="ORF">T22D1.10</name>
</gene>